<reference key="1">
    <citation type="submission" date="2002-12" db="EMBL/GenBank/DDBJ databases">
        <title>Complete genome sequence of Vibrio vulnificus CMCP6.</title>
        <authorList>
            <person name="Rhee J.H."/>
            <person name="Kim S.Y."/>
            <person name="Chung S.S."/>
            <person name="Kim J.J."/>
            <person name="Moon Y.H."/>
            <person name="Jeong H."/>
            <person name="Choy H.E."/>
        </authorList>
    </citation>
    <scope>NUCLEOTIDE SEQUENCE [LARGE SCALE GENOMIC DNA]</scope>
    <source>
        <strain>CMCP6</strain>
    </source>
</reference>
<feature type="chain" id="PRO_0000134006" description="Enolase">
    <location>
        <begin position="1"/>
        <end position="433"/>
    </location>
</feature>
<feature type="active site" description="Proton donor" evidence="1">
    <location>
        <position position="209"/>
    </location>
</feature>
<feature type="active site" description="Proton acceptor" evidence="1">
    <location>
        <position position="343"/>
    </location>
</feature>
<feature type="binding site" evidence="1">
    <location>
        <position position="167"/>
    </location>
    <ligand>
        <name>(2R)-2-phosphoglycerate</name>
        <dbReference type="ChEBI" id="CHEBI:58289"/>
    </ligand>
</feature>
<feature type="binding site" evidence="1">
    <location>
        <position position="246"/>
    </location>
    <ligand>
        <name>Mg(2+)</name>
        <dbReference type="ChEBI" id="CHEBI:18420"/>
    </ligand>
</feature>
<feature type="binding site" evidence="1">
    <location>
        <position position="291"/>
    </location>
    <ligand>
        <name>Mg(2+)</name>
        <dbReference type="ChEBI" id="CHEBI:18420"/>
    </ligand>
</feature>
<feature type="binding site" evidence="1">
    <location>
        <position position="318"/>
    </location>
    <ligand>
        <name>Mg(2+)</name>
        <dbReference type="ChEBI" id="CHEBI:18420"/>
    </ligand>
</feature>
<feature type="binding site" evidence="1">
    <location>
        <position position="343"/>
    </location>
    <ligand>
        <name>(2R)-2-phosphoglycerate</name>
        <dbReference type="ChEBI" id="CHEBI:58289"/>
    </ligand>
</feature>
<feature type="binding site" evidence="1">
    <location>
        <position position="372"/>
    </location>
    <ligand>
        <name>(2R)-2-phosphoglycerate</name>
        <dbReference type="ChEBI" id="CHEBI:58289"/>
    </ligand>
</feature>
<feature type="binding site" evidence="1">
    <location>
        <position position="373"/>
    </location>
    <ligand>
        <name>(2R)-2-phosphoglycerate</name>
        <dbReference type="ChEBI" id="CHEBI:58289"/>
    </ligand>
</feature>
<feature type="binding site" evidence="1">
    <location>
        <position position="394"/>
    </location>
    <ligand>
        <name>(2R)-2-phosphoglycerate</name>
        <dbReference type="ChEBI" id="CHEBI:58289"/>
    </ligand>
</feature>
<accession>Q8DC62</accession>
<proteinExistence type="inferred from homology"/>
<gene>
    <name evidence="1" type="primary">eno</name>
    <name type="ordered locus">VV1_1579</name>
</gene>
<protein>
    <recommendedName>
        <fullName evidence="1">Enolase</fullName>
        <ecNumber evidence="1">4.2.1.11</ecNumber>
    </recommendedName>
    <alternativeName>
        <fullName evidence="1">2-phospho-D-glycerate hydro-lyase</fullName>
    </alternativeName>
    <alternativeName>
        <fullName evidence="1">2-phosphoglycerate dehydratase</fullName>
    </alternativeName>
</protein>
<sequence length="433" mass="45477">MSKIVKVLGREIIDSRGNPTVEAEVHLEGGFVGMAAAPSGASTGSREALELRDGDKARFLGKGVLKAIEAVNGAIADALVGKDAKDQAAIDAIMIELDGTENKSKFGANAILAVSLANAKAAAASKGMPLYEHIAELNGTAGQFSMPLPMMNIINGGEHADNNVDIQEFMIQPVGAKTLKEAVRMGAEVFHNLAKVLKSKGYNTAVGDEGGFAPNLKSNAEALEVIAEAVAAAGYVLGKDVTLAMDCAASEFFDKEAGIYNMKGEGKTFTSEEFNHYLAGLVEQFPIVSIEDGLDESDWAGFAHQTQLLGDKIQLVGDDLFVTNTKILAEGIEKGIANSILIKFNQIGSLTETLAAIKMAKDAGYTAVISHRSGETEDATIADLAVGTAAGQIKTGSMSRSDRVAKYNQLIRIEEALAGRAPFNGLKEVKGQA</sequence>
<name>ENO_VIBVU</name>
<comment type="function">
    <text evidence="1">Catalyzes the reversible conversion of 2-phosphoglycerate (2-PG) into phosphoenolpyruvate (PEP). It is essential for the degradation of carbohydrates via glycolysis.</text>
</comment>
<comment type="catalytic activity">
    <reaction evidence="1">
        <text>(2R)-2-phosphoglycerate = phosphoenolpyruvate + H2O</text>
        <dbReference type="Rhea" id="RHEA:10164"/>
        <dbReference type="ChEBI" id="CHEBI:15377"/>
        <dbReference type="ChEBI" id="CHEBI:58289"/>
        <dbReference type="ChEBI" id="CHEBI:58702"/>
        <dbReference type="EC" id="4.2.1.11"/>
    </reaction>
</comment>
<comment type="cofactor">
    <cofactor evidence="1">
        <name>Mg(2+)</name>
        <dbReference type="ChEBI" id="CHEBI:18420"/>
    </cofactor>
    <text evidence="1">Binds a second Mg(2+) ion via substrate during catalysis.</text>
</comment>
<comment type="pathway">
    <text evidence="1">Carbohydrate degradation; glycolysis; pyruvate from D-glyceraldehyde 3-phosphate: step 4/5.</text>
</comment>
<comment type="subunit">
    <text evidence="1">Component of the RNA degradosome, a multiprotein complex involved in RNA processing and mRNA degradation.</text>
</comment>
<comment type="subcellular location">
    <subcellularLocation>
        <location evidence="1">Cytoplasm</location>
    </subcellularLocation>
    <subcellularLocation>
        <location evidence="1">Secreted</location>
    </subcellularLocation>
    <subcellularLocation>
        <location evidence="1">Cell surface</location>
    </subcellularLocation>
    <text evidence="1">Fractions of enolase are present in both the cytoplasm and on the cell surface.</text>
</comment>
<comment type="similarity">
    <text evidence="1">Belongs to the enolase family.</text>
</comment>
<evidence type="ECO:0000255" key="1">
    <source>
        <dbReference type="HAMAP-Rule" id="MF_00318"/>
    </source>
</evidence>
<organism>
    <name type="scientific">Vibrio vulnificus (strain CMCP6)</name>
    <dbReference type="NCBI Taxonomy" id="216895"/>
    <lineage>
        <taxon>Bacteria</taxon>
        <taxon>Pseudomonadati</taxon>
        <taxon>Pseudomonadota</taxon>
        <taxon>Gammaproteobacteria</taxon>
        <taxon>Vibrionales</taxon>
        <taxon>Vibrionaceae</taxon>
        <taxon>Vibrio</taxon>
    </lineage>
</organism>
<dbReference type="EC" id="4.2.1.11" evidence="1"/>
<dbReference type="EMBL" id="AE016795">
    <property type="protein sequence ID" value="AAO10003.1"/>
    <property type="molecule type" value="Genomic_DNA"/>
</dbReference>
<dbReference type="RefSeq" id="WP_011079513.1">
    <property type="nucleotide sequence ID" value="NC_004459.3"/>
</dbReference>
<dbReference type="SMR" id="Q8DC62"/>
<dbReference type="KEGG" id="vvu:VV1_1579"/>
<dbReference type="HOGENOM" id="CLU_031223_2_1_6"/>
<dbReference type="UniPathway" id="UPA00109">
    <property type="reaction ID" value="UER00187"/>
</dbReference>
<dbReference type="Proteomes" id="UP000002275">
    <property type="component" value="Chromosome 1"/>
</dbReference>
<dbReference type="GO" id="GO:0009986">
    <property type="term" value="C:cell surface"/>
    <property type="evidence" value="ECO:0007669"/>
    <property type="project" value="UniProtKB-SubCell"/>
</dbReference>
<dbReference type="GO" id="GO:0005576">
    <property type="term" value="C:extracellular region"/>
    <property type="evidence" value="ECO:0007669"/>
    <property type="project" value="UniProtKB-SubCell"/>
</dbReference>
<dbReference type="GO" id="GO:0000015">
    <property type="term" value="C:phosphopyruvate hydratase complex"/>
    <property type="evidence" value="ECO:0007669"/>
    <property type="project" value="InterPro"/>
</dbReference>
<dbReference type="GO" id="GO:0000287">
    <property type="term" value="F:magnesium ion binding"/>
    <property type="evidence" value="ECO:0007669"/>
    <property type="project" value="UniProtKB-UniRule"/>
</dbReference>
<dbReference type="GO" id="GO:0004634">
    <property type="term" value="F:phosphopyruvate hydratase activity"/>
    <property type="evidence" value="ECO:0007669"/>
    <property type="project" value="UniProtKB-UniRule"/>
</dbReference>
<dbReference type="GO" id="GO:0006096">
    <property type="term" value="P:glycolytic process"/>
    <property type="evidence" value="ECO:0007669"/>
    <property type="project" value="UniProtKB-UniRule"/>
</dbReference>
<dbReference type="CDD" id="cd03313">
    <property type="entry name" value="enolase"/>
    <property type="match status" value="1"/>
</dbReference>
<dbReference type="FunFam" id="3.20.20.120:FF:000001">
    <property type="entry name" value="Enolase"/>
    <property type="match status" value="1"/>
</dbReference>
<dbReference type="FunFam" id="3.30.390.10:FF:000001">
    <property type="entry name" value="Enolase"/>
    <property type="match status" value="1"/>
</dbReference>
<dbReference type="Gene3D" id="3.20.20.120">
    <property type="entry name" value="Enolase-like C-terminal domain"/>
    <property type="match status" value="1"/>
</dbReference>
<dbReference type="Gene3D" id="3.30.390.10">
    <property type="entry name" value="Enolase-like, N-terminal domain"/>
    <property type="match status" value="1"/>
</dbReference>
<dbReference type="HAMAP" id="MF_00318">
    <property type="entry name" value="Enolase"/>
    <property type="match status" value="1"/>
</dbReference>
<dbReference type="InterPro" id="IPR000941">
    <property type="entry name" value="Enolase"/>
</dbReference>
<dbReference type="InterPro" id="IPR036849">
    <property type="entry name" value="Enolase-like_C_sf"/>
</dbReference>
<dbReference type="InterPro" id="IPR029017">
    <property type="entry name" value="Enolase-like_N"/>
</dbReference>
<dbReference type="InterPro" id="IPR020810">
    <property type="entry name" value="Enolase_C"/>
</dbReference>
<dbReference type="InterPro" id="IPR020809">
    <property type="entry name" value="Enolase_CS"/>
</dbReference>
<dbReference type="InterPro" id="IPR020811">
    <property type="entry name" value="Enolase_N"/>
</dbReference>
<dbReference type="NCBIfam" id="TIGR01060">
    <property type="entry name" value="eno"/>
    <property type="match status" value="1"/>
</dbReference>
<dbReference type="PANTHER" id="PTHR11902">
    <property type="entry name" value="ENOLASE"/>
    <property type="match status" value="1"/>
</dbReference>
<dbReference type="PANTHER" id="PTHR11902:SF1">
    <property type="entry name" value="ENOLASE"/>
    <property type="match status" value="1"/>
</dbReference>
<dbReference type="Pfam" id="PF00113">
    <property type="entry name" value="Enolase_C"/>
    <property type="match status" value="1"/>
</dbReference>
<dbReference type="Pfam" id="PF03952">
    <property type="entry name" value="Enolase_N"/>
    <property type="match status" value="1"/>
</dbReference>
<dbReference type="PIRSF" id="PIRSF001400">
    <property type="entry name" value="Enolase"/>
    <property type="match status" value="1"/>
</dbReference>
<dbReference type="PRINTS" id="PR00148">
    <property type="entry name" value="ENOLASE"/>
</dbReference>
<dbReference type="SFLD" id="SFLDF00002">
    <property type="entry name" value="enolase"/>
    <property type="match status" value="1"/>
</dbReference>
<dbReference type="SFLD" id="SFLDG00178">
    <property type="entry name" value="enolase"/>
    <property type="match status" value="1"/>
</dbReference>
<dbReference type="SMART" id="SM01192">
    <property type="entry name" value="Enolase_C"/>
    <property type="match status" value="1"/>
</dbReference>
<dbReference type="SMART" id="SM01193">
    <property type="entry name" value="Enolase_N"/>
    <property type="match status" value="1"/>
</dbReference>
<dbReference type="SUPFAM" id="SSF51604">
    <property type="entry name" value="Enolase C-terminal domain-like"/>
    <property type="match status" value="1"/>
</dbReference>
<dbReference type="SUPFAM" id="SSF54826">
    <property type="entry name" value="Enolase N-terminal domain-like"/>
    <property type="match status" value="1"/>
</dbReference>
<dbReference type="PROSITE" id="PS00164">
    <property type="entry name" value="ENOLASE"/>
    <property type="match status" value="1"/>
</dbReference>
<keyword id="KW-0963">Cytoplasm</keyword>
<keyword id="KW-0324">Glycolysis</keyword>
<keyword id="KW-0456">Lyase</keyword>
<keyword id="KW-0460">Magnesium</keyword>
<keyword id="KW-0479">Metal-binding</keyword>
<keyword id="KW-0964">Secreted</keyword>